<name>NA245_NEMVE</name>
<dbReference type="EMBL" id="EU124454">
    <property type="protein sequence ID" value="ABW97333.1"/>
    <property type="molecule type" value="Genomic_DNA"/>
</dbReference>
<dbReference type="EMBL" id="EU124457">
    <property type="protein sequence ID" value="ABW97336.1"/>
    <property type="molecule type" value="Genomic_DNA"/>
</dbReference>
<dbReference type="EMBL" id="DS469622">
    <property type="protein sequence ID" value="EDO38676.1"/>
    <property type="status" value="ALT_SEQ"/>
    <property type="molecule type" value="Genomic_DNA"/>
</dbReference>
<dbReference type="RefSeq" id="XP_001630733.1">
    <property type="nucleotide sequence ID" value="XM_001630683.1"/>
</dbReference>
<dbReference type="RefSeq" id="XP_001630735.1">
    <property type="nucleotide sequence ID" value="XM_001630685.1"/>
</dbReference>
<dbReference type="RefSeq" id="XP_001630737.1">
    <property type="nucleotide sequence ID" value="XM_001630687.1"/>
</dbReference>
<dbReference type="RefSeq" id="XP_001630739.1">
    <property type="nucleotide sequence ID" value="XM_001630689.1"/>
</dbReference>
<dbReference type="SMR" id="B1NWR7"/>
<dbReference type="HOGENOM" id="CLU_2944416_0_0_1"/>
<dbReference type="InParanoid" id="B1NWR7"/>
<dbReference type="PhylomeDB" id="B1NWR7"/>
<dbReference type="Proteomes" id="UP000001593">
    <property type="component" value="Unassembled WGS sequence"/>
</dbReference>
<dbReference type="GO" id="GO:0005576">
    <property type="term" value="C:extracellular region"/>
    <property type="evidence" value="ECO:0007669"/>
    <property type="project" value="UniProtKB-SubCell"/>
</dbReference>
<dbReference type="GO" id="GO:0017080">
    <property type="term" value="F:sodium channel regulator activity"/>
    <property type="evidence" value="ECO:0007669"/>
    <property type="project" value="UniProtKB-KW"/>
</dbReference>
<dbReference type="GO" id="GO:0090729">
    <property type="term" value="F:toxin activity"/>
    <property type="evidence" value="ECO:0007669"/>
    <property type="project" value="UniProtKB-KW"/>
</dbReference>
<dbReference type="Gene3D" id="2.20.20.10">
    <property type="entry name" value="Anthopleurin-A"/>
    <property type="match status" value="1"/>
</dbReference>
<dbReference type="InterPro" id="IPR023355">
    <property type="entry name" value="Myo_ane_neurotoxin_sf"/>
</dbReference>
<dbReference type="Pfam" id="PF00706">
    <property type="entry name" value="Toxin_4"/>
    <property type="match status" value="1"/>
</dbReference>
<dbReference type="SUPFAM" id="SSF57392">
    <property type="entry name" value="Defensin-like"/>
    <property type="match status" value="1"/>
</dbReference>
<comment type="function">
    <text evidence="3 4 5 6">Binds to site 3 of voltage-gated sodium channels and inhibits the inactivation process (PubMed:18538344). Is highly active on DmNav1/TipE (drosophila) and is only extremely weakly active on rat Nav1.4-beta-1/SCN4A-SCN1B, and on human Nav1.5-beta-1/SCN5A-beta-1 (PubMed:18538344). This reveals high specificity for arthropod over mammalian channels (PubMed:18538344). In vivo, when released into the medium, this recombinant toxin induces impaired swimming, paralysis and death of the crustacean A.nauplii within several hours (PubMed:22048953). Also causes paralysis of cherry shrimps immediately after injection at very low doses (PubMed:29424690). Its effect on zebrafish (D.rerio) larvae is also rapid, since it induces tail twitching accompanied by impaired swimming after 20 minutes and complete paralysis within 45 minutes (PubMed:22048953). It has also been observed to cause death of zebrafish larvae within 1 hour (PubMed:31134275).</text>
</comment>
<comment type="subcellular location">
    <subcellularLocation>
        <location evidence="3">Secreted</location>
    </subcellularLocation>
</comment>
<comment type="alternative products">
    <event type="alternative splicing"/>
    <isoform>
        <id>B1NWR7-1</id>
        <name>1</name>
        <sequence type="displayed"/>
    </isoform>
    <isoform>
        <id>B1NWR7-2</id>
        <name>2</name>
        <name>truncated</name>
        <sequence type="described" ref="VSP_039752"/>
    </isoform>
    <text>Intron retention discovered for all transcripts, no experimental confirmation available for this specific sequence.</text>
</comment>
<comment type="tissue specificity">
    <text evidence="4 5">Expressed in ectodermal glands and in clumps outside of the extodermal layer (PubMed:22048953). Is not expressed in nematocytes (PubMed:22048953). In adult female tissues, shows similar expression levels in mesenteries (gametes-producing tissue), tentacles, pharynx and physa (PubMed:29424690).</text>
</comment>
<comment type="developmental stage">
    <text evidence="3 4 5 6">Is detected in unfertilized eggs (at protein level) (PubMed:29424690, PubMed:31134275). Is also detected in late planulae, primary polyps and adults (both females and males) (at protein level) (PubMed:22048953, PubMed:29424690). Nv1 is transcribed throughout the complete life cycle and is found at multiple developmental stages including unfertilized eggs, blastulae, gastrulae, early planulae, planulae, metamorphosing planulae, primary polyps, juvenile polyps (2 and 4 months old), adult males, and adult females, with highest levels in juvenile polyps and adults (PubMed:18538344, PubMed:29424690). Importantly, Nv1 transcripts are not spliced in the embryo and planula due to intron retention and therefore Nv1 can be considered purely an adult toxin (PubMed:18538344).</text>
</comment>
<comment type="toxic dose">
    <text evidence="3">PD(50) is 76 nmol/kg into blowfly larvae.</text>
</comment>
<comment type="miscellaneous">
    <text>Nv1 toxin seems to be encoded by 8 different genes. 4 of them code for identical precursors, whereas 4 others code for very similar precursors. In the genome draft, 6 additional loci are also correlated to Nv1 toxin, but they are not predicted to be functional genes. This high similarity may be explained by concerted evolution.</text>
</comment>
<comment type="miscellaneous">
    <text evidence="9">The primary structure of the mature peptide is identical in 9 entries (AC B1NWS4, AC B1NWS1, AC B1NWR6, AC P0CH90, AC P0CH46, AC B1NWS8, AC A7SCE5, AC B1NWR7 and AC P0CH45). Additional information can be found in entry AC B1NWS4.</text>
</comment>
<comment type="miscellaneous">
    <molecule>Isoform 2</molecule>
    <text evidence="9">Due to an intron retention observed only in early life stages (embryo and planula).</text>
</comment>
<comment type="miscellaneous">
    <text evidence="3">Negative results: has no activity on the rat brain channel Nav1.2a-beta-1/SCN2A-SCN1B.</text>
</comment>
<comment type="similarity">
    <text evidence="9">Belongs to the sea anemone sodium channel inhibitory toxin family. Type II subfamily.</text>
</comment>
<comment type="caution">
    <text evidence="9">This toxin precursor is identical to three other precursors (AC B1NWR6, AC B1NWS4 and AC P0CH46). AC B1NWR6 shows 8 variants that could also be associated with this gene.</text>
</comment>
<comment type="sequence caution" evidence="9">
    <conflict type="erroneous gene model prediction">
        <sequence resource="EMBL-CDS" id="EDO38676"/>
    </conflict>
</comment>
<evidence type="ECO:0000250" key="1">
    <source>
        <dbReference type="UniProtKB" id="P19651"/>
    </source>
</evidence>
<evidence type="ECO:0000255" key="2"/>
<evidence type="ECO:0000269" key="3">
    <source>
    </source>
</evidence>
<evidence type="ECO:0000269" key="4">
    <source>
    </source>
</evidence>
<evidence type="ECO:0000269" key="5">
    <source>
    </source>
</evidence>
<evidence type="ECO:0000269" key="6">
    <source>
    </source>
</evidence>
<evidence type="ECO:0000303" key="7">
    <source>
    </source>
</evidence>
<evidence type="ECO:0000303" key="8">
    <source>
    </source>
</evidence>
<evidence type="ECO:0000305" key="9"/>
<evidence type="ECO:0000305" key="10">
    <source>
    </source>
</evidence>
<evidence type="ECO:0000312" key="11">
    <source>
        <dbReference type="EMBL" id="ABW97333.1"/>
    </source>
</evidence>
<evidence type="ECO:0000312" key="12">
    <source>
        <dbReference type="EMBL" id="ABW97336.1"/>
    </source>
</evidence>
<accession>B1NWR7</accession>
<accession>A7SCE0</accession>
<protein>
    <recommendedName>
        <fullName evidence="8">N.vectensis toxin 1 8</fullName>
        <shortName evidence="8">Nv1</shortName>
    </recommendedName>
    <alternativeName>
        <fullName evidence="11">Neurotoxin 1-3</fullName>
    </alternativeName>
    <alternativeName>
        <fullName evidence="12">Neurotoxin 1-6</fullName>
    </alternativeName>
    <alternativeName>
        <fullName evidence="7">Neurotoxin Nv1-116.45.1</fullName>
    </alternativeName>
</protein>
<proteinExistence type="evidence at protein level"/>
<gene>
    <name type="ORF">v1g113209</name>
</gene>
<feature type="signal peptide" evidence="2">
    <location>
        <begin position="1"/>
        <end position="20"/>
    </location>
</feature>
<feature type="propeptide" id="PRO_0000398320" evidence="9">
    <location>
        <begin position="21"/>
        <end position="36"/>
    </location>
</feature>
<feature type="chain" id="PRO_5000319661" description="N.vectensis toxin 1 8" evidence="10">
    <location>
        <begin position="39"/>
        <end position="85"/>
    </location>
</feature>
<feature type="disulfide bond" evidence="1">
    <location>
        <begin position="42"/>
        <end position="82"/>
    </location>
</feature>
<feature type="disulfide bond" evidence="1">
    <location>
        <begin position="44"/>
        <end position="72"/>
    </location>
</feature>
<feature type="disulfide bond" evidence="1">
    <location>
        <begin position="65"/>
        <end position="83"/>
    </location>
</feature>
<feature type="splice variant" id="VSP_039752" description="In isoform 2." evidence="9">
    <original>RDMMSDDELDFHLSKRGIPCACDSDGPDIRSASLSGIVWMGSCPSGWKKCKSYYSIVADCCNQ</original>
    <variation>K</variation>
    <location>
        <begin position="23"/>
        <end position="85"/>
    </location>
</feature>
<sequence length="85" mass="9268">MASFKIVIVCLALLVAVACARRRDMMSDDELDFHLSKRGIPCACDSDGPDIRSASLSGIVWMGSCPSGWKKCKSYYSIVADCCNQ</sequence>
<reference key="1">
    <citation type="journal article" date="2008" name="Mol. Biol. Evol.">
        <title>Concerted evolution of sea anemone neurotoxin genes is revealed through analysis of the Nematostella vectensis genome.</title>
        <authorList>
            <person name="Moran Y."/>
            <person name="Weinberger H."/>
            <person name="Sullivan J.C."/>
            <person name="Reitzel A.M."/>
            <person name="Finnerty J.R."/>
            <person name="Gurevitz M."/>
        </authorList>
    </citation>
    <scope>NUCLEOTIDE SEQUENCE [GENOMIC DNA]</scope>
    <source>
        <strain>Crane Marsh</strain>
        <strain>Neponset River Marsh</strain>
        <strain>Rhode River</strain>
        <strain>Sippewissett Marsh</strain>
    </source>
</reference>
<reference key="2">
    <citation type="journal article" date="2007" name="Science">
        <title>Sea anemone genome reveals ancestral eumetazoan gene repertoire and genomic organization.</title>
        <authorList>
            <person name="Putnam N.H."/>
            <person name="Srivastava M."/>
            <person name="Hellsten U."/>
            <person name="Dirks B."/>
            <person name="Chapman J."/>
            <person name="Salamov A."/>
            <person name="Terry A."/>
            <person name="Shapiro H."/>
            <person name="Lindquist E."/>
            <person name="Kapitonov V.V."/>
            <person name="Jurka J."/>
            <person name="Genikhovich G."/>
            <person name="Grigoriev I.V."/>
            <person name="Lucas S.M."/>
            <person name="Steele R.E."/>
            <person name="Finnerty J.R."/>
            <person name="Technau U."/>
            <person name="Martindale M.Q."/>
            <person name="Rokhsar D.S."/>
        </authorList>
    </citation>
    <scope>NUCLEOTIDE SEQUENCE [LARGE SCALE GENOMIC DNA]</scope>
    <source>
        <strain>CH2 X CH6</strain>
    </source>
</reference>
<reference key="3">
    <citation type="journal article" date="2008" name="J. Mol. Biol.">
        <title>Intron retention as a posttranscriptional regulatory mechanism of neurotoxin expression at early life stages of the starlet anemone Nematostella vectensis.</title>
        <authorList>
            <person name="Moran Y."/>
            <person name="Weinberger H."/>
            <person name="Reitzel A.M."/>
            <person name="Sullivan J.C."/>
            <person name="Kahn R."/>
            <person name="Gordon D."/>
            <person name="Finnerty J.R."/>
            <person name="Gurevitz M."/>
        </authorList>
    </citation>
    <scope>FUNCTION</scope>
    <scope>ALTERNATIVE SPLICING</scope>
    <scope>DEVELOPMENTAL STAGE</scope>
    <scope>TOXIC DOSE</scope>
    <source>
        <strain>Sippewissett Marsh</strain>
    </source>
</reference>
<reference key="4">
    <citation type="journal article" date="2012" name="Proc. R. Soc. B">
        <title>Neurotoxin localization to ectodermal gland cells uncovers an alternative mechanism of venom delivery in sea anemones.</title>
        <authorList>
            <person name="Moran Y."/>
            <person name="Genikhovich G."/>
            <person name="Gordon D."/>
            <person name="Wienkoop S."/>
            <person name="Zenkert C."/>
            <person name="Ozbek S."/>
            <person name="Technau U."/>
            <person name="Gurevitz M."/>
        </authorList>
    </citation>
    <scope>FUNCTION</scope>
    <scope>TISSUE SPECIFICITY</scope>
    <scope>DEVELOPMENTAL STAGE</scope>
</reference>
<reference key="5">
    <citation type="journal article" date="2018" name="Elife">
        <title>Dynamics of venom composition across a complex life cycle.</title>
        <authorList>
            <person name="Columbus-Shenkar Y.Y."/>
            <person name="Sachkova M.Y."/>
            <person name="Macrander J."/>
            <person name="Fridrich A."/>
            <person name="Modepalli V."/>
            <person name="Reitzel A.M."/>
            <person name="Sunagar K."/>
            <person name="Moran Y."/>
        </authorList>
    </citation>
    <scope>FUNCTION</scope>
    <scope>DEVELOPMENTAL STAGE</scope>
</reference>
<reference key="6">
    <citation type="journal article" date="2019" name="Mol. Biol. Evol.">
        <title>The birth and death of toxins with distinct functions: a case study in the sea anemone Nematostella.</title>
        <authorList>
            <person name="Sachkova M.Y."/>
            <person name="Singer S.A."/>
            <person name="Macrander J."/>
            <person name="Reitzel A.M."/>
            <person name="Peigneur S."/>
            <person name="Tytgat J."/>
            <person name="Moran Y."/>
        </authorList>
    </citation>
    <scope>FUNCTION</scope>
    <scope>IDENTIFICATION BY MASS SPECTROMETRY</scope>
    <scope>DEVELOPMENTAL STAGE</scope>
</reference>
<organism>
    <name type="scientific">Nematostella vectensis</name>
    <name type="common">Starlet sea anemone</name>
    <dbReference type="NCBI Taxonomy" id="45351"/>
    <lineage>
        <taxon>Eukaryota</taxon>
        <taxon>Metazoa</taxon>
        <taxon>Cnidaria</taxon>
        <taxon>Anthozoa</taxon>
        <taxon>Hexacorallia</taxon>
        <taxon>Actiniaria</taxon>
        <taxon>Edwardsiidae</taxon>
        <taxon>Nematostella</taxon>
    </lineage>
</organism>
<keyword id="KW-0025">Alternative splicing</keyword>
<keyword id="KW-0165">Cleavage on pair of basic residues</keyword>
<keyword id="KW-1015">Disulfide bond</keyword>
<keyword id="KW-0872">Ion channel impairing toxin</keyword>
<keyword id="KW-0528">Neurotoxin</keyword>
<keyword id="KW-1185">Reference proteome</keyword>
<keyword id="KW-0964">Secreted</keyword>
<keyword id="KW-0732">Signal</keyword>
<keyword id="KW-0800">Toxin</keyword>
<keyword id="KW-0738">Voltage-gated sodium channel impairing toxin</keyword>